<organism>
    <name type="scientific">Brachyspira hyodysenteriae</name>
    <name type="common">Treponema hyodysenteriae</name>
    <dbReference type="NCBI Taxonomy" id="159"/>
    <lineage>
        <taxon>Bacteria</taxon>
        <taxon>Pseudomonadati</taxon>
        <taxon>Spirochaetota</taxon>
        <taxon>Spirochaetia</taxon>
        <taxon>Brachyspirales</taxon>
        <taxon>Brachyspiraceae</taxon>
        <taxon>Brachyspira</taxon>
    </lineage>
</organism>
<feature type="chain" id="PRO_0000225621" description="Acyl carrier protein">
    <location>
        <begin position="1"/>
        <end position="78"/>
    </location>
</feature>
<feature type="chain" id="PRO_0000000560" description="Beta-hemolysin">
    <location>
        <begin position="8"/>
        <end position="78"/>
    </location>
</feature>
<feature type="domain" description="Carrier" evidence="2">
    <location>
        <begin position="1"/>
        <end position="77"/>
    </location>
</feature>
<feature type="modified residue" description="O-(pantetheine 4'-phosphoryl)serine" evidence="2">
    <location>
        <position position="37"/>
    </location>
</feature>
<sequence length="78" mass="8934">MALIDEIKDVVANQLNISDKSKITDTASFVDDLNADSLDLVELIMELEKRYEIKIPQEDQEKIKNVADAAKYIEEHKK</sequence>
<protein>
    <recommendedName>
        <fullName>Acyl carrier protein</fullName>
        <shortName>ACP</shortName>
    </recommendedName>
    <component>
        <recommendedName>
            <fullName>Beta-hemolysin</fullName>
        </recommendedName>
    </component>
</protein>
<evidence type="ECO:0000250" key="1"/>
<evidence type="ECO:0000255" key="2">
    <source>
        <dbReference type="PROSITE-ProRule" id="PRU00258"/>
    </source>
</evidence>
<evidence type="ECO:0000269" key="3">
    <source>
    </source>
</evidence>
<evidence type="ECO:0000305" key="4"/>
<keyword id="KW-0204">Cytolysis</keyword>
<keyword id="KW-0903">Direct protein sequencing</keyword>
<keyword id="KW-0275">Fatty acid biosynthesis</keyword>
<keyword id="KW-0276">Fatty acid metabolism</keyword>
<keyword id="KW-0354">Hemolysis</keyword>
<keyword id="KW-0444">Lipid biosynthesis</keyword>
<keyword id="KW-0443">Lipid metabolism</keyword>
<keyword id="KW-0596">Phosphopantetheine</keyword>
<keyword id="KW-0597">Phosphoprotein</keyword>
<keyword id="KW-0964">Secreted</keyword>
<keyword id="KW-0800">Toxin</keyword>
<keyword id="KW-0843">Virulence</keyword>
<name>ACP_BRAHO</name>
<comment type="function">
    <text evidence="1 3">Carrier of the growing fatty acid chain in fatty acid biosynthesis (By similarity). Has hemolytic activity forming pores approximately 1 nm in diameter into erythrocytes. Is able to induce murine colonic lesions and to disrupt the integrity of epithelial cell monolayers.</text>
</comment>
<comment type="pathway">
    <text>Lipid metabolism; fatty acid biosynthesis.</text>
</comment>
<comment type="subcellular location">
    <subcellularLocation>
        <location>Secreted</location>
    </subcellularLocation>
</comment>
<comment type="PTM">
    <text evidence="1">4'-phosphopantetheine is transferred from CoA to a specific serine of apo-ACP by AcpS. This modification is essential for activity because fatty acids are bound in thioester linkage to the sulfhydryl of the prosthetic group (By similarity).</text>
</comment>
<comment type="similarity">
    <text evidence="4">Belongs to the acyl carrier protein (ACP) family.</text>
</comment>
<reference key="1">
    <citation type="journal article" date="2001" name="Infect. Immun.">
        <title>Cloning of a beta-hemolysin gene of Brachyspira (Serpulina) hyodysenteriae and its expression in Escherichia coli.</title>
        <authorList>
            <person name="Hsu T."/>
            <person name="Hutto D.L."/>
            <person name="Minion F.C."/>
            <person name="Zuerner R.L."/>
            <person name="Wannemuehler M.J."/>
        </authorList>
    </citation>
    <scope>NUCLEOTIDE SEQUENCE [GENOMIC DNA]</scope>
    <scope>PROTEIN SEQUENCE OF 8-20</scope>
    <scope>FUNCTION</scope>
    <source>
        <strain>B204</strain>
    </source>
</reference>
<gene>
    <name type="primary">acpP</name>
    <name type="synonym">hlyA</name>
</gene>
<dbReference type="EMBL" id="U94886">
    <property type="protein sequence ID" value="AAB68774.1"/>
    <property type="molecule type" value="Genomic_DNA"/>
</dbReference>
<dbReference type="RefSeq" id="WP_008724300.1">
    <property type="nucleotide sequence ID" value="NZ_MKXF01000041.1"/>
</dbReference>
<dbReference type="SMR" id="O34163"/>
<dbReference type="GeneID" id="66488063"/>
<dbReference type="OMA" id="REIICEQ"/>
<dbReference type="UniPathway" id="UPA00094"/>
<dbReference type="GO" id="GO:0005829">
    <property type="term" value="C:cytosol"/>
    <property type="evidence" value="ECO:0007669"/>
    <property type="project" value="TreeGrafter"/>
</dbReference>
<dbReference type="GO" id="GO:0005576">
    <property type="term" value="C:extracellular region"/>
    <property type="evidence" value="ECO:0007669"/>
    <property type="project" value="UniProtKB-SubCell"/>
</dbReference>
<dbReference type="GO" id="GO:0016020">
    <property type="term" value="C:membrane"/>
    <property type="evidence" value="ECO:0007669"/>
    <property type="project" value="GOC"/>
</dbReference>
<dbReference type="GO" id="GO:0000035">
    <property type="term" value="F:acyl binding"/>
    <property type="evidence" value="ECO:0007669"/>
    <property type="project" value="TreeGrafter"/>
</dbReference>
<dbReference type="GO" id="GO:0000036">
    <property type="term" value="F:acyl carrier activity"/>
    <property type="evidence" value="ECO:0007669"/>
    <property type="project" value="UniProtKB-UniRule"/>
</dbReference>
<dbReference type="GO" id="GO:0090729">
    <property type="term" value="F:toxin activity"/>
    <property type="evidence" value="ECO:0007669"/>
    <property type="project" value="UniProtKB-KW"/>
</dbReference>
<dbReference type="GO" id="GO:0031640">
    <property type="term" value="P:killing of cells of another organism"/>
    <property type="evidence" value="ECO:0007669"/>
    <property type="project" value="UniProtKB-KW"/>
</dbReference>
<dbReference type="GO" id="GO:0009245">
    <property type="term" value="P:lipid A biosynthetic process"/>
    <property type="evidence" value="ECO:0007669"/>
    <property type="project" value="TreeGrafter"/>
</dbReference>
<dbReference type="Gene3D" id="1.10.1200.10">
    <property type="entry name" value="ACP-like"/>
    <property type="match status" value="1"/>
</dbReference>
<dbReference type="HAMAP" id="MF_01217">
    <property type="entry name" value="Acyl_carrier"/>
    <property type="match status" value="1"/>
</dbReference>
<dbReference type="InterPro" id="IPR003231">
    <property type="entry name" value="ACP"/>
</dbReference>
<dbReference type="InterPro" id="IPR036736">
    <property type="entry name" value="ACP-like_sf"/>
</dbReference>
<dbReference type="InterPro" id="IPR009081">
    <property type="entry name" value="PP-bd_ACP"/>
</dbReference>
<dbReference type="InterPro" id="IPR006162">
    <property type="entry name" value="Ppantetheine_attach_site"/>
</dbReference>
<dbReference type="NCBIfam" id="TIGR00517">
    <property type="entry name" value="acyl_carrier"/>
    <property type="match status" value="1"/>
</dbReference>
<dbReference type="NCBIfam" id="NF002148">
    <property type="entry name" value="PRK00982.1-2"/>
    <property type="match status" value="1"/>
</dbReference>
<dbReference type="NCBIfam" id="NF002150">
    <property type="entry name" value="PRK00982.1-4"/>
    <property type="match status" value="1"/>
</dbReference>
<dbReference type="PANTHER" id="PTHR20863">
    <property type="entry name" value="ACYL CARRIER PROTEIN"/>
    <property type="match status" value="1"/>
</dbReference>
<dbReference type="PANTHER" id="PTHR20863:SF76">
    <property type="entry name" value="CARRIER DOMAIN-CONTAINING PROTEIN"/>
    <property type="match status" value="1"/>
</dbReference>
<dbReference type="Pfam" id="PF00550">
    <property type="entry name" value="PP-binding"/>
    <property type="match status" value="1"/>
</dbReference>
<dbReference type="SUPFAM" id="SSF47336">
    <property type="entry name" value="ACP-like"/>
    <property type="match status" value="1"/>
</dbReference>
<dbReference type="PROSITE" id="PS50075">
    <property type="entry name" value="CARRIER"/>
    <property type="match status" value="1"/>
</dbReference>
<dbReference type="PROSITE" id="PS00012">
    <property type="entry name" value="PHOSPHOPANTETHEINE"/>
    <property type="match status" value="1"/>
</dbReference>
<proteinExistence type="evidence at protein level"/>
<accession>O34163</accession>